<protein>
    <recommendedName>
        <fullName>Neuropeptides B/W receptor type 1</fullName>
    </recommendedName>
    <alternativeName>
        <fullName>G-protein coupled receptor 7</fullName>
    </alternativeName>
</protein>
<gene>
    <name type="primary">NPBWR1</name>
    <name type="synonym">GPR7</name>
</gene>
<organism>
    <name type="scientific">Homo sapiens</name>
    <name type="common">Human</name>
    <dbReference type="NCBI Taxonomy" id="9606"/>
    <lineage>
        <taxon>Eukaryota</taxon>
        <taxon>Metazoa</taxon>
        <taxon>Chordata</taxon>
        <taxon>Craniata</taxon>
        <taxon>Vertebrata</taxon>
        <taxon>Euteleostomi</taxon>
        <taxon>Mammalia</taxon>
        <taxon>Eutheria</taxon>
        <taxon>Euarchontoglires</taxon>
        <taxon>Primates</taxon>
        <taxon>Haplorrhini</taxon>
        <taxon>Catarrhini</taxon>
        <taxon>Hominidae</taxon>
        <taxon>Homo</taxon>
    </lineage>
</organism>
<reference key="1">
    <citation type="journal article" date="1995" name="Genomics">
        <title>The cloning and chromosomal mapping of two novel human opioid-somatostatin-like receptor genes, GPR7 and GPR8, expressed in discrete areas of the brain.</title>
        <authorList>
            <person name="O'Dowd B.F."/>
            <person name="Scheideler M.A."/>
            <person name="Nguyen T."/>
            <person name="Cheng R."/>
            <person name="Rasmussen J.S."/>
            <person name="Marchese A."/>
            <person name="Zastawny R."/>
            <person name="Heng H.H.Q."/>
            <person name="Tsui L.-C."/>
            <person name="Shi X."/>
            <person name="Asa S."/>
            <person name="Puy L."/>
            <person name="George S.R."/>
        </authorList>
    </citation>
    <scope>NUCLEOTIDE SEQUENCE [GENOMIC DNA]</scope>
</reference>
<reference key="2">
    <citation type="submission" date="2005-07" db="EMBL/GenBank/DDBJ databases">
        <authorList>
            <person name="Mural R.J."/>
            <person name="Istrail S."/>
            <person name="Sutton G.G."/>
            <person name="Florea L."/>
            <person name="Halpern A.L."/>
            <person name="Mobarry C.M."/>
            <person name="Lippert R."/>
            <person name="Walenz B."/>
            <person name="Shatkay H."/>
            <person name="Dew I."/>
            <person name="Miller J.R."/>
            <person name="Flanigan M.J."/>
            <person name="Edwards N.J."/>
            <person name="Bolanos R."/>
            <person name="Fasulo D."/>
            <person name="Halldorsson B.V."/>
            <person name="Hannenhalli S."/>
            <person name="Turner R."/>
            <person name="Yooseph S."/>
            <person name="Lu F."/>
            <person name="Nusskern D.R."/>
            <person name="Shue B.C."/>
            <person name="Zheng X.H."/>
            <person name="Zhong F."/>
            <person name="Delcher A.L."/>
            <person name="Huson D.H."/>
            <person name="Kravitz S.A."/>
            <person name="Mouchard L."/>
            <person name="Reinert K."/>
            <person name="Remington K.A."/>
            <person name="Clark A.G."/>
            <person name="Waterman M.S."/>
            <person name="Eichler E.E."/>
            <person name="Adams M.D."/>
            <person name="Hunkapiller M.W."/>
            <person name="Myers E.W."/>
            <person name="Venter J.C."/>
        </authorList>
    </citation>
    <scope>NUCLEOTIDE SEQUENCE [LARGE SCALE GENOMIC DNA]</scope>
</reference>
<reference key="3">
    <citation type="journal article" date="2004" name="Genome Res.">
        <title>The status, quality, and expansion of the NIH full-length cDNA project: the Mammalian Gene Collection (MGC).</title>
        <authorList>
            <consortium name="The MGC Project Team"/>
        </authorList>
    </citation>
    <scope>NUCLEOTIDE SEQUENCE [LARGE SCALE MRNA]</scope>
</reference>
<reference key="4">
    <citation type="journal article" date="2003" name="J. Biol. Chem.">
        <title>Identification of natural ligands for the orphan G protein-coupled receptors GPR7 and GPR8.</title>
        <authorList>
            <person name="Brezillon S."/>
            <person name="Lannoy V."/>
            <person name="Franssen J.-D."/>
            <person name="Le Poul E."/>
            <person name="Dupriez V."/>
            <person name="Lucchetti J."/>
            <person name="Detheux M."/>
            <person name="Parmentier M."/>
        </authorList>
    </citation>
    <scope>TISSUE SPECIFICITY</scope>
    <scope>INTERACTION WITH NEUROPEPTIDES B AND W</scope>
</reference>
<reference key="5">
    <citation type="journal article" date="2003" name="Proc. Natl. Acad. Sci. U.S.A.">
        <title>Characterization of a family of endogenous neuropeptide ligands for the G protein-coupled receptors GPR7 and GPR8.</title>
        <authorList>
            <person name="Tanaka H."/>
            <person name="Yoshida T."/>
            <person name="Miyamoto N."/>
            <person name="Motoike T."/>
            <person name="Kurosu H."/>
            <person name="Shibata K."/>
            <person name="Yamanaka A."/>
            <person name="Williams S.C."/>
            <person name="Richardson J.A."/>
            <person name="Tsujino N."/>
            <person name="Garry M.G."/>
            <person name="Lerner M.R."/>
            <person name="King D.S."/>
            <person name="O'Dowd B.F."/>
            <person name="Sakurai T."/>
            <person name="Yanagisawa M."/>
        </authorList>
    </citation>
    <scope>INTERACTION WITH NEUROPEPTIDES B AND W</scope>
</reference>
<reference key="6">
    <citation type="journal article" date="2006" name="Science">
        <title>The consensus coding sequences of human breast and colorectal cancers.</title>
        <authorList>
            <person name="Sjoeblom T."/>
            <person name="Jones S."/>
            <person name="Wood L.D."/>
            <person name="Parsons D.W."/>
            <person name="Lin J."/>
            <person name="Barber T.D."/>
            <person name="Mandelker D."/>
            <person name="Leary R.J."/>
            <person name="Ptak J."/>
            <person name="Silliman N."/>
            <person name="Szabo S."/>
            <person name="Buckhaults P."/>
            <person name="Farrell C."/>
            <person name="Meeh P."/>
            <person name="Markowitz S.D."/>
            <person name="Willis J."/>
            <person name="Dawson D."/>
            <person name="Willson J.K.V."/>
            <person name="Gazdar A.F."/>
            <person name="Hartigan J."/>
            <person name="Wu L."/>
            <person name="Liu C."/>
            <person name="Parmigiani G."/>
            <person name="Park B.H."/>
            <person name="Bachman K.E."/>
            <person name="Papadopoulos N."/>
            <person name="Vogelstein B."/>
            <person name="Kinzler K.W."/>
            <person name="Velculescu V.E."/>
        </authorList>
    </citation>
    <scope>VARIANT [LARGE SCALE ANALYSIS] GLN-19</scope>
</reference>
<comment type="function">
    <text>Interacts specifically with a number of opioid ligands. Receptor for neuropeptides B and W, which may be involved in neuroendocrine system regulation, food intake and the organization of other signals. Has a higher affinity for neuropeptide B.</text>
</comment>
<comment type="interaction">
    <interactant intactId="EBI-13061492">
        <id>P48145</id>
    </interactant>
    <interactant intactId="EBI-947187">
        <id>Q9UHD9</id>
        <label>UBQLN2</label>
    </interactant>
    <organismsDiffer>false</organismsDiffer>
    <experiments>3</experiments>
</comment>
<comment type="subcellular location">
    <subcellularLocation>
        <location>Cell membrane</location>
        <topology>Multi-pass membrane protein</topology>
    </subcellularLocation>
</comment>
<comment type="tissue specificity">
    <text evidence="3">Found in cerebellum and frontal cortex. Detected at high levels in hippocampus, amygdala and trachea; at moderate levels in fetal brain, pituitary gland and prostate. Not in caudate, accumbens, kidney or liver. Also detected at high levels in lung carcinoma.</text>
</comment>
<comment type="similarity">
    <text evidence="2">Belongs to the G-protein coupled receptor 1 family.</text>
</comment>
<feature type="chain" id="PRO_0000069518" description="Neuropeptides B/W receptor type 1">
    <location>
        <begin position="1"/>
        <end position="328"/>
    </location>
</feature>
<feature type="topological domain" description="Extracellular" evidence="1">
    <location>
        <begin position="1"/>
        <end position="37"/>
    </location>
</feature>
<feature type="transmembrane region" description="Helical; Name=1" evidence="1">
    <location>
        <begin position="38"/>
        <end position="61"/>
    </location>
</feature>
<feature type="topological domain" description="Cytoplasmic" evidence="1">
    <location>
        <begin position="62"/>
        <end position="72"/>
    </location>
</feature>
<feature type="transmembrane region" description="Helical; Name=2" evidence="1">
    <location>
        <begin position="73"/>
        <end position="97"/>
    </location>
</feature>
<feature type="topological domain" description="Extracellular" evidence="1">
    <location>
        <begin position="98"/>
        <end position="112"/>
    </location>
</feature>
<feature type="transmembrane region" description="Helical; Name=3" evidence="1">
    <location>
        <begin position="113"/>
        <end position="132"/>
    </location>
</feature>
<feature type="topological domain" description="Cytoplasmic" evidence="1">
    <location>
        <begin position="133"/>
        <end position="157"/>
    </location>
</feature>
<feature type="transmembrane region" description="Helical; Name=4" evidence="1">
    <location>
        <begin position="158"/>
        <end position="177"/>
    </location>
</feature>
<feature type="topological domain" description="Extracellular" evidence="1">
    <location>
        <begin position="178"/>
        <end position="202"/>
    </location>
</feature>
<feature type="transmembrane region" description="Helical; Name=5" evidence="1">
    <location>
        <begin position="203"/>
        <end position="224"/>
    </location>
</feature>
<feature type="topological domain" description="Cytoplasmic" evidence="1">
    <location>
        <begin position="225"/>
        <end position="248"/>
    </location>
</feature>
<feature type="transmembrane region" description="Helical; Name=6" evidence="1">
    <location>
        <begin position="249"/>
        <end position="273"/>
    </location>
</feature>
<feature type="topological domain" description="Extracellular" evidence="1">
    <location>
        <begin position="274"/>
        <end position="283"/>
    </location>
</feature>
<feature type="transmembrane region" description="Helical; Name=7" evidence="1">
    <location>
        <begin position="284"/>
        <end position="298"/>
    </location>
</feature>
<feature type="topological domain" description="Cytoplasmic" evidence="1">
    <location>
        <begin position="299"/>
        <end position="328"/>
    </location>
</feature>
<feature type="glycosylation site" description="N-linked (GlcNAc...) asparagine" evidence="1">
    <location>
        <position position="3"/>
    </location>
</feature>
<feature type="glycosylation site" description="N-linked (GlcNAc...) asparagine" evidence="1">
    <location>
        <position position="13"/>
    </location>
</feature>
<feature type="glycosylation site" description="N-linked (GlcNAc...) asparagine" evidence="1">
    <location>
        <position position="25"/>
    </location>
</feature>
<feature type="disulfide bond" evidence="2">
    <location>
        <begin position="109"/>
        <end position="188"/>
    </location>
</feature>
<feature type="sequence variant" id="VAR_035765" description="In a breast cancer sample; somatic mutation; dbSNP:rs772418985." evidence="4">
    <original>P</original>
    <variation>Q</variation>
    <location>
        <position position="19"/>
    </location>
</feature>
<feature type="sequence variant" id="VAR_047788" description="In dbSNP:rs33977775.">
    <original>Y</original>
    <variation>F</variation>
    <location>
        <position position="135"/>
    </location>
</feature>
<feature type="sequence variant" id="VAR_047789" description="In dbSNP:rs36068168.">
    <original>R</original>
    <variation>C</variation>
    <location>
        <position position="319"/>
    </location>
</feature>
<feature type="sequence conflict" description="In Ref. 1; AAC50197." evidence="5" ref="1">
    <original>S</original>
    <variation>T</variation>
    <location>
        <position position="296"/>
    </location>
</feature>
<name>NPBW1_HUMAN</name>
<accession>P48145</accession>
<accession>Q6NTC7</accession>
<keyword id="KW-1003">Cell membrane</keyword>
<keyword id="KW-1015">Disulfide bond</keyword>
<keyword id="KW-0297">G-protein coupled receptor</keyword>
<keyword id="KW-0325">Glycoprotein</keyword>
<keyword id="KW-0472">Membrane</keyword>
<keyword id="KW-0675">Receptor</keyword>
<keyword id="KW-1185">Reference proteome</keyword>
<keyword id="KW-0807">Transducer</keyword>
<keyword id="KW-0812">Transmembrane</keyword>
<keyword id="KW-1133">Transmembrane helix</keyword>
<dbReference type="EMBL" id="U22491">
    <property type="protein sequence ID" value="AAC50197.1"/>
    <property type="molecule type" value="Genomic_DNA"/>
</dbReference>
<dbReference type="EMBL" id="CH471068">
    <property type="protein sequence ID" value="EAW86722.1"/>
    <property type="molecule type" value="Genomic_DNA"/>
</dbReference>
<dbReference type="EMBL" id="BC069117">
    <property type="protein sequence ID" value="AAH69117.1"/>
    <property type="molecule type" value="mRNA"/>
</dbReference>
<dbReference type="EMBL" id="BC107101">
    <property type="protein sequence ID" value="AAI07102.1"/>
    <property type="molecule type" value="mRNA"/>
</dbReference>
<dbReference type="CCDS" id="CCDS6151.1"/>
<dbReference type="PIR" id="I38973">
    <property type="entry name" value="I38973"/>
</dbReference>
<dbReference type="RefSeq" id="NP_005276.2">
    <property type="nucleotide sequence ID" value="NM_005285.5"/>
</dbReference>
<dbReference type="SMR" id="P48145"/>
<dbReference type="BioGRID" id="109092">
    <property type="interactions" value="3"/>
</dbReference>
<dbReference type="CORUM" id="P48145"/>
<dbReference type="FunCoup" id="P48145">
    <property type="interactions" value="523"/>
</dbReference>
<dbReference type="IntAct" id="P48145">
    <property type="interactions" value="1"/>
</dbReference>
<dbReference type="STRING" id="9606.ENSP00000330284"/>
<dbReference type="BindingDB" id="P48145"/>
<dbReference type="ChEMBL" id="CHEMBL1293293"/>
<dbReference type="GuidetoPHARMACOLOGY" id="303"/>
<dbReference type="GlyCosmos" id="P48145">
    <property type="glycosylation" value="4 sites, 1 glycan"/>
</dbReference>
<dbReference type="GlyGen" id="P48145">
    <property type="glycosylation" value="4 sites, 1 O-linked glycan (1 site)"/>
</dbReference>
<dbReference type="iPTMnet" id="P48145"/>
<dbReference type="PhosphoSitePlus" id="P48145"/>
<dbReference type="BioMuta" id="NPBWR1"/>
<dbReference type="DMDM" id="215274092"/>
<dbReference type="jPOST" id="P48145"/>
<dbReference type="PaxDb" id="9606-ENSP00000330284"/>
<dbReference type="Antibodypedia" id="82634">
    <property type="antibodies" value="225 antibodies from 29 providers"/>
</dbReference>
<dbReference type="DNASU" id="2831"/>
<dbReference type="Ensembl" id="ENST00000674939.1">
    <property type="protein sequence ID" value="ENSP00000501711.1"/>
    <property type="gene ID" value="ENSG00000288611.1"/>
</dbReference>
<dbReference type="GeneID" id="2831"/>
<dbReference type="KEGG" id="hsa:2831"/>
<dbReference type="MANE-Select" id="ENST00000674939.1">
    <property type="protein sequence ID" value="ENSP00000501711.1"/>
    <property type="RefSeq nucleotide sequence ID" value="NM_005285.5"/>
    <property type="RefSeq protein sequence ID" value="NP_005276.2"/>
</dbReference>
<dbReference type="UCSC" id="uc011ldu.3">
    <property type="organism name" value="human"/>
</dbReference>
<dbReference type="AGR" id="HGNC:4522"/>
<dbReference type="CTD" id="2831"/>
<dbReference type="DisGeNET" id="2831"/>
<dbReference type="GeneCards" id="NPBWR1"/>
<dbReference type="HGNC" id="HGNC:4522">
    <property type="gene designation" value="NPBWR1"/>
</dbReference>
<dbReference type="HPA" id="ENSG00000288611">
    <property type="expression patterns" value="Tissue enhanced (brain, liver)"/>
</dbReference>
<dbReference type="MIM" id="600730">
    <property type="type" value="gene"/>
</dbReference>
<dbReference type="neXtProt" id="NX_P48145"/>
<dbReference type="PharmGKB" id="PA28912"/>
<dbReference type="VEuPathDB" id="HostDB:ENSG00000288611"/>
<dbReference type="eggNOG" id="KOG3656">
    <property type="taxonomic scope" value="Eukaryota"/>
</dbReference>
<dbReference type="GeneTree" id="ENSGT00940000161936"/>
<dbReference type="HOGENOM" id="CLU_009579_8_1_1"/>
<dbReference type="InParanoid" id="P48145"/>
<dbReference type="OMA" id="YKLRHMH"/>
<dbReference type="OrthoDB" id="6076970at2759"/>
<dbReference type="PAN-GO" id="P48145">
    <property type="GO annotations" value="5 GO annotations based on evolutionary models"/>
</dbReference>
<dbReference type="PhylomeDB" id="P48145"/>
<dbReference type="TreeFam" id="TF315737"/>
<dbReference type="PathwayCommons" id="P48145"/>
<dbReference type="Reactome" id="R-HSA-375276">
    <property type="pathway name" value="Peptide ligand-binding receptors"/>
</dbReference>
<dbReference type="Reactome" id="R-HSA-418594">
    <property type="pathway name" value="G alpha (i) signalling events"/>
</dbReference>
<dbReference type="SignaLink" id="P48145"/>
<dbReference type="SIGNOR" id="P48145"/>
<dbReference type="BioGRID-ORCS" id="2831">
    <property type="hits" value="15 hits in 1134 CRISPR screens"/>
</dbReference>
<dbReference type="GeneWiki" id="Neuropeptides_B/W_receptor_1"/>
<dbReference type="GenomeRNAi" id="2831"/>
<dbReference type="Pharos" id="P48145">
    <property type="development level" value="Tchem"/>
</dbReference>
<dbReference type="PRO" id="PR:P48145"/>
<dbReference type="Proteomes" id="UP000005640">
    <property type="component" value="Chromosome 8"/>
</dbReference>
<dbReference type="RNAct" id="P48145">
    <property type="molecule type" value="protein"/>
</dbReference>
<dbReference type="Bgee" id="ENSG00000288611">
    <property type="expression patterns" value="Expressed in male germ line stem cell (sensu Vertebrata) in testis and 49 other cell types or tissues"/>
</dbReference>
<dbReference type="ExpressionAtlas" id="P48145">
    <property type="expression patterns" value="baseline and differential"/>
</dbReference>
<dbReference type="GO" id="GO:0016020">
    <property type="term" value="C:membrane"/>
    <property type="evidence" value="ECO:0000305"/>
    <property type="project" value="HGNC-UCL"/>
</dbReference>
<dbReference type="GO" id="GO:0043005">
    <property type="term" value="C:neuron projection"/>
    <property type="evidence" value="ECO:0000318"/>
    <property type="project" value="GO_Central"/>
</dbReference>
<dbReference type="GO" id="GO:0005886">
    <property type="term" value="C:plasma membrane"/>
    <property type="evidence" value="ECO:0000318"/>
    <property type="project" value="GO_Central"/>
</dbReference>
<dbReference type="GO" id="GO:0045202">
    <property type="term" value="C:synapse"/>
    <property type="evidence" value="ECO:0007669"/>
    <property type="project" value="GOC"/>
</dbReference>
<dbReference type="GO" id="GO:0004985">
    <property type="term" value="F:G protein-coupled opioid receptor activity"/>
    <property type="evidence" value="ECO:0000304"/>
    <property type="project" value="ProtInc"/>
</dbReference>
<dbReference type="GO" id="GO:0004930">
    <property type="term" value="F:G protein-coupled receptor activity"/>
    <property type="evidence" value="ECO:0000318"/>
    <property type="project" value="GO_Central"/>
</dbReference>
<dbReference type="GO" id="GO:0042923">
    <property type="term" value="F:neuropeptide binding"/>
    <property type="evidence" value="ECO:0000318"/>
    <property type="project" value="GO_Central"/>
</dbReference>
<dbReference type="GO" id="GO:0008188">
    <property type="term" value="F:neuropeptide receptor activity"/>
    <property type="evidence" value="ECO:0007669"/>
    <property type="project" value="InterPro"/>
</dbReference>
<dbReference type="GO" id="GO:0007268">
    <property type="term" value="P:chemical synaptic transmission"/>
    <property type="evidence" value="ECO:0000304"/>
    <property type="project" value="ProtInc"/>
</dbReference>
<dbReference type="GO" id="GO:0007186">
    <property type="term" value="P:G protein-coupled receptor signaling pathway"/>
    <property type="evidence" value="ECO:0000314"/>
    <property type="project" value="HGNC-UCL"/>
</dbReference>
<dbReference type="GO" id="GO:0007218">
    <property type="term" value="P:neuropeptide signaling pathway"/>
    <property type="evidence" value="ECO:0000318"/>
    <property type="project" value="GO_Central"/>
</dbReference>
<dbReference type="GO" id="GO:0019222">
    <property type="term" value="P:regulation of metabolic process"/>
    <property type="evidence" value="ECO:0007669"/>
    <property type="project" value="Ensembl"/>
</dbReference>
<dbReference type="CDD" id="cd15087">
    <property type="entry name" value="7tmA_NPBWR"/>
    <property type="match status" value="1"/>
</dbReference>
<dbReference type="FunFam" id="1.20.1070.10:FF:000102">
    <property type="entry name" value="neuropeptides B/W receptor type 1"/>
    <property type="match status" value="1"/>
</dbReference>
<dbReference type="Gene3D" id="1.20.1070.10">
    <property type="entry name" value="Rhodopsin 7-helix transmembrane proteins"/>
    <property type="match status" value="1"/>
</dbReference>
<dbReference type="InterPro" id="IPR000276">
    <property type="entry name" value="GPCR_Rhodpsn"/>
</dbReference>
<dbReference type="InterPro" id="IPR017452">
    <property type="entry name" value="GPCR_Rhodpsn_7TM"/>
</dbReference>
<dbReference type="InterPro" id="IPR009150">
    <property type="entry name" value="Neuropept_B/W_rcpt"/>
</dbReference>
<dbReference type="PANTHER" id="PTHR24229:SF47">
    <property type="entry name" value="NEUROPEPTIDES B_W RECEPTOR TYPE 1"/>
    <property type="match status" value="1"/>
</dbReference>
<dbReference type="PANTHER" id="PTHR24229">
    <property type="entry name" value="NEUROPEPTIDES RECEPTOR"/>
    <property type="match status" value="1"/>
</dbReference>
<dbReference type="Pfam" id="PF00001">
    <property type="entry name" value="7tm_1"/>
    <property type="match status" value="1"/>
</dbReference>
<dbReference type="PRINTS" id="PR00237">
    <property type="entry name" value="GPCRRHODOPSN"/>
</dbReference>
<dbReference type="PRINTS" id="PR01855">
    <property type="entry name" value="NRPEPTIDEWR"/>
</dbReference>
<dbReference type="SUPFAM" id="SSF81321">
    <property type="entry name" value="Family A G protein-coupled receptor-like"/>
    <property type="match status" value="1"/>
</dbReference>
<dbReference type="PROSITE" id="PS00237">
    <property type="entry name" value="G_PROTEIN_RECEP_F1_1"/>
    <property type="match status" value="1"/>
</dbReference>
<dbReference type="PROSITE" id="PS50262">
    <property type="entry name" value="G_PROTEIN_RECEP_F1_2"/>
    <property type="match status" value="1"/>
</dbReference>
<sequence length="328" mass="36103">MDNASFSEPWPANASGPDPALSCSNASTLAPLPAPLAVAVPVVYAVICAVGLAGNSAVLYVLLRAPRMKTVTNLFILNLAIADELFTLVLPINIADFLLRQWPFGELMCKLIVAIDQYNTFSSLYFLTVMSADRYLVVLATAESRRVAGRTYSAARAVSLAVWGIVTLVVLPFAVFARLDDEQGRRQCVLVFPQPEAFWWRASRLYTLVLGFAIPVSTICVLYTTLLCRLHAMRLDSHAKALERAKKRVTFLVVAILAVCLLCWTPYHLSTVVALTTDLPQTPLVIAISYFITSLSYANSCLNPFLYAFLDASFRRNLRQLITCRAAA</sequence>
<evidence type="ECO:0000255" key="1"/>
<evidence type="ECO:0000255" key="2">
    <source>
        <dbReference type="PROSITE-ProRule" id="PRU00521"/>
    </source>
</evidence>
<evidence type="ECO:0000269" key="3">
    <source>
    </source>
</evidence>
<evidence type="ECO:0000269" key="4">
    <source>
    </source>
</evidence>
<evidence type="ECO:0000305" key="5"/>
<proteinExistence type="evidence at protein level"/>